<feature type="chain" id="PRO_1000198665" description="Pyrimidine/purine nucleoside phosphorylase">
    <location>
        <begin position="1"/>
        <end position="94"/>
    </location>
</feature>
<organism>
    <name type="scientific">Escherichia fergusonii (strain ATCC 35469 / DSM 13698 / CCUG 18766 / IAM 14443 / JCM 21226 / LMG 7866 / NBRC 102419 / NCTC 12128 / CDC 0568-73)</name>
    <dbReference type="NCBI Taxonomy" id="585054"/>
    <lineage>
        <taxon>Bacteria</taxon>
        <taxon>Pseudomonadati</taxon>
        <taxon>Pseudomonadota</taxon>
        <taxon>Gammaproteobacteria</taxon>
        <taxon>Enterobacterales</taxon>
        <taxon>Enterobacteriaceae</taxon>
        <taxon>Escherichia</taxon>
    </lineage>
</organism>
<reference key="1">
    <citation type="journal article" date="2009" name="PLoS Genet.">
        <title>Organised genome dynamics in the Escherichia coli species results in highly diverse adaptive paths.</title>
        <authorList>
            <person name="Touchon M."/>
            <person name="Hoede C."/>
            <person name="Tenaillon O."/>
            <person name="Barbe V."/>
            <person name="Baeriswyl S."/>
            <person name="Bidet P."/>
            <person name="Bingen E."/>
            <person name="Bonacorsi S."/>
            <person name="Bouchier C."/>
            <person name="Bouvet O."/>
            <person name="Calteau A."/>
            <person name="Chiapello H."/>
            <person name="Clermont O."/>
            <person name="Cruveiller S."/>
            <person name="Danchin A."/>
            <person name="Diard M."/>
            <person name="Dossat C."/>
            <person name="Karoui M.E."/>
            <person name="Frapy E."/>
            <person name="Garry L."/>
            <person name="Ghigo J.M."/>
            <person name="Gilles A.M."/>
            <person name="Johnson J."/>
            <person name="Le Bouguenec C."/>
            <person name="Lescat M."/>
            <person name="Mangenot S."/>
            <person name="Martinez-Jehanne V."/>
            <person name="Matic I."/>
            <person name="Nassif X."/>
            <person name="Oztas S."/>
            <person name="Petit M.A."/>
            <person name="Pichon C."/>
            <person name="Rouy Z."/>
            <person name="Ruf C.S."/>
            <person name="Schneider D."/>
            <person name="Tourret J."/>
            <person name="Vacherie B."/>
            <person name="Vallenet D."/>
            <person name="Medigue C."/>
            <person name="Rocha E.P.C."/>
            <person name="Denamur E."/>
        </authorList>
    </citation>
    <scope>NUCLEOTIDE SEQUENCE [LARGE SCALE GENOMIC DNA]</scope>
    <source>
        <strain>ATCC 35469 / DSM 13698 / BCRC 15582 / CCUG 18766 / IAM 14443 / JCM 21226 / LMG 7866 / NBRC 102419 / NCTC 12128 / CDC 0568-73</strain>
    </source>
</reference>
<evidence type="ECO:0000255" key="1">
    <source>
        <dbReference type="HAMAP-Rule" id="MF_01537"/>
    </source>
</evidence>
<accession>B7LMJ4</accession>
<gene>
    <name evidence="1" type="primary">ppnP</name>
    <name type="ordered locus">EFER_2632</name>
</gene>
<sequence>MLQSNEYFSGKVKSIGFTSSSTGRASVGVMVEGEYLFSTAEPEEMTVISGALNVLLPEATEWQVYQAGQVFNVPGHSEFHLQVAEPTSYLCRYL</sequence>
<dbReference type="EC" id="2.4.2.1" evidence="1"/>
<dbReference type="EC" id="2.4.2.2" evidence="1"/>
<dbReference type="EMBL" id="CU928158">
    <property type="protein sequence ID" value="CAQ90127.1"/>
    <property type="molecule type" value="Genomic_DNA"/>
</dbReference>
<dbReference type="RefSeq" id="WP_000941955.1">
    <property type="nucleotide sequence ID" value="NC_011740.1"/>
</dbReference>
<dbReference type="SMR" id="B7LMJ4"/>
<dbReference type="GeneID" id="75056338"/>
<dbReference type="KEGG" id="efe:EFER_2632"/>
<dbReference type="HOGENOM" id="CLU_157874_0_0_6"/>
<dbReference type="OrthoDB" id="9793848at2"/>
<dbReference type="Proteomes" id="UP000000745">
    <property type="component" value="Chromosome"/>
</dbReference>
<dbReference type="GO" id="GO:0005829">
    <property type="term" value="C:cytosol"/>
    <property type="evidence" value="ECO:0007669"/>
    <property type="project" value="TreeGrafter"/>
</dbReference>
<dbReference type="GO" id="GO:0047975">
    <property type="term" value="F:guanosine phosphorylase activity"/>
    <property type="evidence" value="ECO:0007669"/>
    <property type="project" value="UniProtKB-EC"/>
</dbReference>
<dbReference type="GO" id="GO:0004731">
    <property type="term" value="F:purine-nucleoside phosphorylase activity"/>
    <property type="evidence" value="ECO:0007669"/>
    <property type="project" value="UniProtKB-UniRule"/>
</dbReference>
<dbReference type="GO" id="GO:0009032">
    <property type="term" value="F:thymidine phosphorylase activity"/>
    <property type="evidence" value="ECO:0007669"/>
    <property type="project" value="UniProtKB-EC"/>
</dbReference>
<dbReference type="GO" id="GO:0004850">
    <property type="term" value="F:uridine phosphorylase activity"/>
    <property type="evidence" value="ECO:0007669"/>
    <property type="project" value="UniProtKB-EC"/>
</dbReference>
<dbReference type="CDD" id="cd20296">
    <property type="entry name" value="cupin_PpnP-like"/>
    <property type="match status" value="1"/>
</dbReference>
<dbReference type="FunFam" id="2.60.120.10:FF:000016">
    <property type="entry name" value="Pyrimidine/purine nucleoside phosphorylase"/>
    <property type="match status" value="1"/>
</dbReference>
<dbReference type="Gene3D" id="2.60.120.10">
    <property type="entry name" value="Jelly Rolls"/>
    <property type="match status" value="1"/>
</dbReference>
<dbReference type="HAMAP" id="MF_01537">
    <property type="entry name" value="Nucleos_phosphorylase_PpnP"/>
    <property type="match status" value="1"/>
</dbReference>
<dbReference type="InterPro" id="IPR009664">
    <property type="entry name" value="Ppnp"/>
</dbReference>
<dbReference type="InterPro" id="IPR014710">
    <property type="entry name" value="RmlC-like_jellyroll"/>
</dbReference>
<dbReference type="InterPro" id="IPR011051">
    <property type="entry name" value="RmlC_Cupin_sf"/>
</dbReference>
<dbReference type="NCBIfam" id="NF007875">
    <property type="entry name" value="PRK10579.1"/>
    <property type="match status" value="1"/>
</dbReference>
<dbReference type="PANTHER" id="PTHR36540">
    <property type="entry name" value="PYRIMIDINE/PURINE NUCLEOSIDE PHOSPHORYLASE"/>
    <property type="match status" value="1"/>
</dbReference>
<dbReference type="PANTHER" id="PTHR36540:SF1">
    <property type="entry name" value="PYRIMIDINE_PURINE NUCLEOSIDE PHOSPHORYLASE"/>
    <property type="match status" value="1"/>
</dbReference>
<dbReference type="Pfam" id="PF06865">
    <property type="entry name" value="Ppnp"/>
    <property type="match status" value="1"/>
</dbReference>
<dbReference type="SUPFAM" id="SSF51182">
    <property type="entry name" value="RmlC-like cupins"/>
    <property type="match status" value="1"/>
</dbReference>
<keyword id="KW-0328">Glycosyltransferase</keyword>
<keyword id="KW-0808">Transferase</keyword>
<comment type="function">
    <text evidence="1">Catalyzes the phosphorolysis of diverse nucleosides, yielding D-ribose 1-phosphate and the respective free bases. Can use uridine, adenosine, guanosine, cytidine, thymidine, inosine and xanthosine as substrates. Also catalyzes the reverse reactions.</text>
</comment>
<comment type="catalytic activity">
    <reaction evidence="1">
        <text>a purine D-ribonucleoside + phosphate = a purine nucleobase + alpha-D-ribose 1-phosphate</text>
        <dbReference type="Rhea" id="RHEA:19805"/>
        <dbReference type="ChEBI" id="CHEBI:26386"/>
        <dbReference type="ChEBI" id="CHEBI:43474"/>
        <dbReference type="ChEBI" id="CHEBI:57720"/>
        <dbReference type="ChEBI" id="CHEBI:142355"/>
        <dbReference type="EC" id="2.4.2.1"/>
    </reaction>
</comment>
<comment type="catalytic activity">
    <reaction evidence="1">
        <text>adenosine + phosphate = alpha-D-ribose 1-phosphate + adenine</text>
        <dbReference type="Rhea" id="RHEA:27642"/>
        <dbReference type="ChEBI" id="CHEBI:16335"/>
        <dbReference type="ChEBI" id="CHEBI:16708"/>
        <dbReference type="ChEBI" id="CHEBI:43474"/>
        <dbReference type="ChEBI" id="CHEBI:57720"/>
        <dbReference type="EC" id="2.4.2.1"/>
    </reaction>
</comment>
<comment type="catalytic activity">
    <reaction evidence="1">
        <text>cytidine + phosphate = cytosine + alpha-D-ribose 1-phosphate</text>
        <dbReference type="Rhea" id="RHEA:52540"/>
        <dbReference type="ChEBI" id="CHEBI:16040"/>
        <dbReference type="ChEBI" id="CHEBI:17562"/>
        <dbReference type="ChEBI" id="CHEBI:43474"/>
        <dbReference type="ChEBI" id="CHEBI:57720"/>
        <dbReference type="EC" id="2.4.2.2"/>
    </reaction>
</comment>
<comment type="catalytic activity">
    <reaction evidence="1">
        <text>guanosine + phosphate = alpha-D-ribose 1-phosphate + guanine</text>
        <dbReference type="Rhea" id="RHEA:13233"/>
        <dbReference type="ChEBI" id="CHEBI:16235"/>
        <dbReference type="ChEBI" id="CHEBI:16750"/>
        <dbReference type="ChEBI" id="CHEBI:43474"/>
        <dbReference type="ChEBI" id="CHEBI:57720"/>
        <dbReference type="EC" id="2.4.2.1"/>
    </reaction>
</comment>
<comment type="catalytic activity">
    <reaction evidence="1">
        <text>inosine + phosphate = alpha-D-ribose 1-phosphate + hypoxanthine</text>
        <dbReference type="Rhea" id="RHEA:27646"/>
        <dbReference type="ChEBI" id="CHEBI:17368"/>
        <dbReference type="ChEBI" id="CHEBI:17596"/>
        <dbReference type="ChEBI" id="CHEBI:43474"/>
        <dbReference type="ChEBI" id="CHEBI:57720"/>
        <dbReference type="EC" id="2.4.2.1"/>
    </reaction>
</comment>
<comment type="catalytic activity">
    <reaction evidence="1">
        <text>thymidine + phosphate = 2-deoxy-alpha-D-ribose 1-phosphate + thymine</text>
        <dbReference type="Rhea" id="RHEA:16037"/>
        <dbReference type="ChEBI" id="CHEBI:17748"/>
        <dbReference type="ChEBI" id="CHEBI:17821"/>
        <dbReference type="ChEBI" id="CHEBI:43474"/>
        <dbReference type="ChEBI" id="CHEBI:57259"/>
        <dbReference type="EC" id="2.4.2.2"/>
    </reaction>
</comment>
<comment type="catalytic activity">
    <reaction evidence="1">
        <text>uridine + phosphate = alpha-D-ribose 1-phosphate + uracil</text>
        <dbReference type="Rhea" id="RHEA:24388"/>
        <dbReference type="ChEBI" id="CHEBI:16704"/>
        <dbReference type="ChEBI" id="CHEBI:17568"/>
        <dbReference type="ChEBI" id="CHEBI:43474"/>
        <dbReference type="ChEBI" id="CHEBI:57720"/>
        <dbReference type="EC" id="2.4.2.2"/>
    </reaction>
</comment>
<comment type="catalytic activity">
    <reaction evidence="1">
        <text>xanthosine + phosphate = alpha-D-ribose 1-phosphate + xanthine</text>
        <dbReference type="Rhea" id="RHEA:27638"/>
        <dbReference type="ChEBI" id="CHEBI:17712"/>
        <dbReference type="ChEBI" id="CHEBI:18107"/>
        <dbReference type="ChEBI" id="CHEBI:43474"/>
        <dbReference type="ChEBI" id="CHEBI:57720"/>
        <dbReference type="EC" id="2.4.2.1"/>
    </reaction>
</comment>
<comment type="similarity">
    <text evidence="1">Belongs to the nucleoside phosphorylase PpnP family.</text>
</comment>
<proteinExistence type="inferred from homology"/>
<protein>
    <recommendedName>
        <fullName evidence="1">Pyrimidine/purine nucleoside phosphorylase</fullName>
        <ecNumber evidence="1">2.4.2.1</ecNumber>
        <ecNumber evidence="1">2.4.2.2</ecNumber>
    </recommendedName>
    <alternativeName>
        <fullName evidence="1">Adenosine phosphorylase</fullName>
    </alternativeName>
    <alternativeName>
        <fullName evidence="1">Cytidine phosphorylase</fullName>
    </alternativeName>
    <alternativeName>
        <fullName evidence="1">Guanosine phosphorylase</fullName>
    </alternativeName>
    <alternativeName>
        <fullName evidence="1">Inosine phosphorylase</fullName>
    </alternativeName>
    <alternativeName>
        <fullName evidence="1">Thymidine phosphorylase</fullName>
    </alternativeName>
    <alternativeName>
        <fullName evidence="1">Uridine phosphorylase</fullName>
    </alternativeName>
    <alternativeName>
        <fullName evidence="1">Xanthosine phosphorylase</fullName>
    </alternativeName>
</protein>
<name>PPNP_ESCF3</name>